<sequence length="80" mass="8718">MGFTKILVTFFLVGLLVISSSPQNAIASEIKAKINGLECFNTCTSYYDDHKCNVDCLSSGYPAGECYTVSPSQPKKCCCY</sequence>
<proteinExistence type="inferred from homology"/>
<protein>
    <recommendedName>
        <fullName>Defensin-like protein 51</fullName>
    </recommendedName>
    <alternativeName>
        <fullName>Low-molecular-weight cysteine-rich protein 48</fullName>
        <shortName>Protein LCR48</shortName>
    </alternativeName>
</protein>
<accession>P82763</accession>
<accession>A0MJW7</accession>
<accession>A7REH1</accession>
<comment type="subcellular location">
    <subcellularLocation>
        <location evidence="1">Secreted</location>
    </subcellularLocation>
</comment>
<comment type="similarity">
    <text evidence="3">Belongs to the DEFL family.</text>
</comment>
<comment type="sequence caution" evidence="3">
    <conflict type="erroneous termination">
        <sequence resource="EMBL-CDS" id="ABK27962"/>
    </conflict>
    <text>Extended C-terminus.</text>
</comment>
<organism evidence="3">
    <name type="scientific">Arabidopsis thaliana</name>
    <name type="common">Mouse-ear cress</name>
    <dbReference type="NCBI Taxonomy" id="3702"/>
    <lineage>
        <taxon>Eukaryota</taxon>
        <taxon>Viridiplantae</taxon>
        <taxon>Streptophyta</taxon>
        <taxon>Embryophyta</taxon>
        <taxon>Tracheophyta</taxon>
        <taxon>Spermatophyta</taxon>
        <taxon>Magnoliopsida</taxon>
        <taxon>eudicotyledons</taxon>
        <taxon>Gunneridae</taxon>
        <taxon>Pentapetalae</taxon>
        <taxon>rosids</taxon>
        <taxon>malvids</taxon>
        <taxon>Brassicales</taxon>
        <taxon>Brassicaceae</taxon>
        <taxon>Camelineae</taxon>
        <taxon>Arabidopsis</taxon>
    </lineage>
</organism>
<dbReference type="EMBL" id="AL096856">
    <property type="status" value="NOT_ANNOTATED_CDS"/>
    <property type="molecule type" value="Genomic_DNA"/>
</dbReference>
<dbReference type="EMBL" id="CP002686">
    <property type="protein sequence ID" value="AEE78388.1"/>
    <property type="molecule type" value="Genomic_DNA"/>
</dbReference>
<dbReference type="EMBL" id="DQ912220">
    <property type="protein sequence ID" value="ABI34023.1"/>
    <property type="molecule type" value="mRNA"/>
</dbReference>
<dbReference type="EMBL" id="DQ912266">
    <property type="protein sequence ID" value="ABK27962.1"/>
    <property type="status" value="ALT_SEQ"/>
    <property type="molecule type" value="mRNA"/>
</dbReference>
<dbReference type="EMBL" id="EF182814">
    <property type="status" value="NOT_ANNOTATED_CDS"/>
    <property type="molecule type" value="mRNA"/>
</dbReference>
<dbReference type="RefSeq" id="NP_001030830.1">
    <property type="nucleotide sequence ID" value="NM_001035753.3"/>
</dbReference>
<dbReference type="SMR" id="P82763"/>
<dbReference type="STRING" id="3702.P82763"/>
<dbReference type="PaxDb" id="3702-AT3G48231.1"/>
<dbReference type="ProteomicsDB" id="224045"/>
<dbReference type="EnsemblPlants" id="AT3G48231.1">
    <property type="protein sequence ID" value="AT3G48231.1"/>
    <property type="gene ID" value="AT3G48231"/>
</dbReference>
<dbReference type="GeneID" id="3769681"/>
<dbReference type="Gramene" id="AT3G48231.1">
    <property type="protein sequence ID" value="AT3G48231.1"/>
    <property type="gene ID" value="AT3G48231"/>
</dbReference>
<dbReference type="KEGG" id="ath:AT3G48231"/>
<dbReference type="Araport" id="AT3G48231"/>
<dbReference type="TAIR" id="AT3G48231">
    <property type="gene designation" value="LCR48"/>
</dbReference>
<dbReference type="HOGENOM" id="CLU_165205_1_0_1"/>
<dbReference type="InParanoid" id="P82763"/>
<dbReference type="OMA" id="APEHCCC"/>
<dbReference type="PhylomeDB" id="P82763"/>
<dbReference type="PRO" id="PR:P82763"/>
<dbReference type="Proteomes" id="UP000006548">
    <property type="component" value="Chromosome 3"/>
</dbReference>
<dbReference type="ExpressionAtlas" id="P82763">
    <property type="expression patterns" value="baseline and differential"/>
</dbReference>
<dbReference type="GO" id="GO:0005576">
    <property type="term" value="C:extracellular region"/>
    <property type="evidence" value="ECO:0007669"/>
    <property type="project" value="UniProtKB-SubCell"/>
</dbReference>
<dbReference type="GO" id="GO:0050832">
    <property type="term" value="P:defense response to fungus"/>
    <property type="evidence" value="ECO:0007669"/>
    <property type="project" value="UniProtKB-KW"/>
</dbReference>
<dbReference type="GO" id="GO:0031640">
    <property type="term" value="P:killing of cells of another organism"/>
    <property type="evidence" value="ECO:0007669"/>
    <property type="project" value="UniProtKB-KW"/>
</dbReference>
<dbReference type="InterPro" id="IPR056373">
    <property type="entry name" value="Defensin-like_dom"/>
</dbReference>
<dbReference type="Pfam" id="PF24552">
    <property type="entry name" value="Defensin"/>
    <property type="match status" value="1"/>
</dbReference>
<keyword id="KW-0929">Antimicrobial</keyword>
<keyword id="KW-1015">Disulfide bond</keyword>
<keyword id="KW-0295">Fungicide</keyword>
<keyword id="KW-0611">Plant defense</keyword>
<keyword id="KW-1185">Reference proteome</keyword>
<keyword id="KW-0964">Secreted</keyword>
<keyword id="KW-0732">Signal</keyword>
<evidence type="ECO:0000250" key="1"/>
<evidence type="ECO:0000255" key="2"/>
<evidence type="ECO:0000305" key="3"/>
<feature type="signal peptide" evidence="2">
    <location>
        <begin position="1"/>
        <end position="27"/>
    </location>
</feature>
<feature type="chain" id="PRO_0000017287" description="Defensin-like protein 51">
    <location>
        <begin position="28"/>
        <end position="80"/>
    </location>
</feature>
<feature type="disulfide bond" evidence="1">
    <location>
        <begin position="39"/>
        <end position="79"/>
    </location>
</feature>
<feature type="disulfide bond" evidence="1">
    <location>
        <begin position="43"/>
        <end position="66"/>
    </location>
</feature>
<feature type="disulfide bond" evidence="1">
    <location>
        <begin position="52"/>
        <end position="77"/>
    </location>
</feature>
<feature type="disulfide bond" evidence="1">
    <location>
        <begin position="56"/>
        <end position="78"/>
    </location>
</feature>
<reference evidence="3" key="1">
    <citation type="journal article" date="2000" name="Nature">
        <title>Sequence and analysis of chromosome 3 of the plant Arabidopsis thaliana.</title>
        <authorList>
            <person name="Salanoubat M."/>
            <person name="Lemcke K."/>
            <person name="Rieger M."/>
            <person name="Ansorge W."/>
            <person name="Unseld M."/>
            <person name="Fartmann B."/>
            <person name="Valle G."/>
            <person name="Bloecker H."/>
            <person name="Perez-Alonso M."/>
            <person name="Obermaier B."/>
            <person name="Delseny M."/>
            <person name="Boutry M."/>
            <person name="Grivell L.A."/>
            <person name="Mache R."/>
            <person name="Puigdomenech P."/>
            <person name="De Simone V."/>
            <person name="Choisne N."/>
            <person name="Artiguenave F."/>
            <person name="Robert C."/>
            <person name="Brottier P."/>
            <person name="Wincker P."/>
            <person name="Cattolico L."/>
            <person name="Weissenbach J."/>
            <person name="Saurin W."/>
            <person name="Quetier F."/>
            <person name="Schaefer M."/>
            <person name="Mueller-Auer S."/>
            <person name="Gabel C."/>
            <person name="Fuchs M."/>
            <person name="Benes V."/>
            <person name="Wurmbach E."/>
            <person name="Drzonek H."/>
            <person name="Erfle H."/>
            <person name="Jordan N."/>
            <person name="Bangert S."/>
            <person name="Wiedelmann R."/>
            <person name="Kranz H."/>
            <person name="Voss H."/>
            <person name="Holland R."/>
            <person name="Brandt P."/>
            <person name="Nyakatura G."/>
            <person name="Vezzi A."/>
            <person name="D'Angelo M."/>
            <person name="Pallavicini A."/>
            <person name="Toppo S."/>
            <person name="Simionati B."/>
            <person name="Conrad A."/>
            <person name="Hornischer K."/>
            <person name="Kauer G."/>
            <person name="Loehnert T.-H."/>
            <person name="Nordsiek G."/>
            <person name="Reichelt J."/>
            <person name="Scharfe M."/>
            <person name="Schoen O."/>
            <person name="Bargues M."/>
            <person name="Terol J."/>
            <person name="Climent J."/>
            <person name="Navarro P."/>
            <person name="Collado C."/>
            <person name="Perez-Perez A."/>
            <person name="Ottenwaelder B."/>
            <person name="Duchemin D."/>
            <person name="Cooke R."/>
            <person name="Laudie M."/>
            <person name="Berger-Llauro C."/>
            <person name="Purnelle B."/>
            <person name="Masuy D."/>
            <person name="de Haan M."/>
            <person name="Maarse A.C."/>
            <person name="Alcaraz J.-P."/>
            <person name="Cottet A."/>
            <person name="Casacuberta E."/>
            <person name="Monfort A."/>
            <person name="Argiriou A."/>
            <person name="Flores M."/>
            <person name="Liguori R."/>
            <person name="Vitale D."/>
            <person name="Mannhaupt G."/>
            <person name="Haase D."/>
            <person name="Schoof H."/>
            <person name="Rudd S."/>
            <person name="Zaccaria P."/>
            <person name="Mewes H.-W."/>
            <person name="Mayer K.F.X."/>
            <person name="Kaul S."/>
            <person name="Town C.D."/>
            <person name="Koo H.L."/>
            <person name="Tallon L.J."/>
            <person name="Jenkins J."/>
            <person name="Rooney T."/>
            <person name="Rizzo M."/>
            <person name="Walts A."/>
            <person name="Utterback T."/>
            <person name="Fujii C.Y."/>
            <person name="Shea T.P."/>
            <person name="Creasy T.H."/>
            <person name="Haas B."/>
            <person name="Maiti R."/>
            <person name="Wu D."/>
            <person name="Peterson J."/>
            <person name="Van Aken S."/>
            <person name="Pai G."/>
            <person name="Militscher J."/>
            <person name="Sellers P."/>
            <person name="Gill J.E."/>
            <person name="Feldblyum T.V."/>
            <person name="Preuss D."/>
            <person name="Lin X."/>
            <person name="Nierman W.C."/>
            <person name="Salzberg S.L."/>
            <person name="White O."/>
            <person name="Venter J.C."/>
            <person name="Fraser C.M."/>
            <person name="Kaneko T."/>
            <person name="Nakamura Y."/>
            <person name="Sato S."/>
            <person name="Kato T."/>
            <person name="Asamizu E."/>
            <person name="Sasamoto S."/>
            <person name="Kimura T."/>
            <person name="Idesawa K."/>
            <person name="Kawashima K."/>
            <person name="Kishida Y."/>
            <person name="Kiyokawa C."/>
            <person name="Kohara M."/>
            <person name="Matsumoto M."/>
            <person name="Matsuno A."/>
            <person name="Muraki A."/>
            <person name="Nakayama S."/>
            <person name="Nakazaki N."/>
            <person name="Shinpo S."/>
            <person name="Takeuchi C."/>
            <person name="Wada T."/>
            <person name="Watanabe A."/>
            <person name="Yamada M."/>
            <person name="Yasuda M."/>
            <person name="Tabata S."/>
        </authorList>
    </citation>
    <scope>NUCLEOTIDE SEQUENCE [LARGE SCALE GENOMIC DNA]</scope>
    <source>
        <strain>cv. Columbia</strain>
    </source>
</reference>
<reference key="2">
    <citation type="journal article" date="2017" name="Plant J.">
        <title>Araport11: a complete reannotation of the Arabidopsis thaliana reference genome.</title>
        <authorList>
            <person name="Cheng C.Y."/>
            <person name="Krishnakumar V."/>
            <person name="Chan A.P."/>
            <person name="Thibaud-Nissen F."/>
            <person name="Schobel S."/>
            <person name="Town C.D."/>
        </authorList>
    </citation>
    <scope>GENOME REANNOTATION</scope>
    <source>
        <strain>cv. Columbia</strain>
    </source>
</reference>
<reference key="3">
    <citation type="journal article" date="2006" name="Plant Biotechnol. J.">
        <title>Simultaneous high-throughput recombinational cloning of open reading frames in closed and open configurations.</title>
        <authorList>
            <person name="Underwood B.A."/>
            <person name="Vanderhaeghen R."/>
            <person name="Whitford R."/>
            <person name="Town C.D."/>
            <person name="Hilson P."/>
        </authorList>
    </citation>
    <scope>NUCLEOTIDE SEQUENCE [LARGE SCALE MRNA]</scope>
    <source>
        <strain>cv. Columbia</strain>
    </source>
</reference>
<reference key="4">
    <citation type="journal article" date="2007" name="Plant J.">
        <title>Small cysteine-rich peptides resembling antimicrobial peptides have been under-predicted in plants.</title>
        <authorList>
            <person name="Silverstein K.A.T."/>
            <person name="Moskal W.A. Jr."/>
            <person name="Wu H.C."/>
            <person name="Underwood B.A."/>
            <person name="Graham M.A."/>
            <person name="Town C.D."/>
            <person name="VandenBosch K.A."/>
        </authorList>
    </citation>
    <scope>NUCLEOTIDE SEQUENCE [LARGE SCALE MRNA]</scope>
    <source>
        <strain>cv. Columbia</strain>
    </source>
</reference>
<reference evidence="3" key="5">
    <citation type="journal article" date="2001" name="Plant Mol. Biol.">
        <title>Two large Arabidopsis thaliana gene families are homologous to the Brassica gene superfamily that encodes pollen coat proteins and the male component of the self-incompatibility response.</title>
        <authorList>
            <person name="Vanoosthuyse V."/>
            <person name="Miege C."/>
            <person name="Dumas C."/>
            <person name="Cock J.M."/>
        </authorList>
    </citation>
    <scope>IDENTIFICATION</scope>
</reference>
<reference key="6">
    <citation type="journal article" date="2005" name="Plant Physiol.">
        <title>Genome organization of more than 300 defensin-like genes in Arabidopsis.</title>
        <authorList>
            <person name="Silverstein K.A.T."/>
            <person name="Graham M.A."/>
            <person name="Paape T.D."/>
            <person name="VandenBosch K.A."/>
        </authorList>
    </citation>
    <scope>GENE FAMILY</scope>
</reference>
<gene>
    <name type="primary">LCR48</name>
    <name type="ordered locus">At3g48231</name>
    <name type="ORF">T24C20</name>
</gene>
<name>DEF51_ARATH</name>